<comment type="function">
    <text evidence="1">Catalyzes the NADPH-dependent reduction of L-glutamate 5-phosphate into L-glutamate 5-semialdehyde and phosphate. The product spontaneously undergoes cyclization to form 1-pyrroline-5-carboxylate.</text>
</comment>
<comment type="catalytic activity">
    <reaction evidence="1">
        <text>L-glutamate 5-semialdehyde + phosphate + NADP(+) = L-glutamyl 5-phosphate + NADPH + H(+)</text>
        <dbReference type="Rhea" id="RHEA:19541"/>
        <dbReference type="ChEBI" id="CHEBI:15378"/>
        <dbReference type="ChEBI" id="CHEBI:43474"/>
        <dbReference type="ChEBI" id="CHEBI:57783"/>
        <dbReference type="ChEBI" id="CHEBI:58066"/>
        <dbReference type="ChEBI" id="CHEBI:58274"/>
        <dbReference type="ChEBI" id="CHEBI:58349"/>
        <dbReference type="EC" id="1.2.1.41"/>
    </reaction>
</comment>
<comment type="pathway">
    <text evidence="1">Amino-acid biosynthesis; L-proline biosynthesis; L-glutamate 5-semialdehyde from L-glutamate: step 2/2.</text>
</comment>
<comment type="subcellular location">
    <subcellularLocation>
        <location evidence="1">Cytoplasm</location>
    </subcellularLocation>
</comment>
<comment type="similarity">
    <text evidence="1">Belongs to the gamma-glutamyl phosphate reductase family.</text>
</comment>
<protein>
    <recommendedName>
        <fullName evidence="1">Gamma-glutamyl phosphate reductase</fullName>
        <shortName evidence="1">GPR</shortName>
        <ecNumber evidence="1">1.2.1.41</ecNumber>
    </recommendedName>
    <alternativeName>
        <fullName evidence="1">Glutamate-5-semialdehyde dehydrogenase</fullName>
    </alternativeName>
    <alternativeName>
        <fullName evidence="1">Glutamyl-gamma-semialdehyde dehydrogenase</fullName>
        <shortName evidence="1">GSA dehydrogenase</shortName>
    </alternativeName>
</protein>
<name>PROA_ECO8A</name>
<dbReference type="EC" id="1.2.1.41" evidence="1"/>
<dbReference type="EMBL" id="CU928160">
    <property type="protein sequence ID" value="CAQ97156.1"/>
    <property type="molecule type" value="Genomic_DNA"/>
</dbReference>
<dbReference type="RefSeq" id="WP_000893255.1">
    <property type="nucleotide sequence ID" value="NC_011741.1"/>
</dbReference>
<dbReference type="SMR" id="B7M272"/>
<dbReference type="GeneID" id="75205724"/>
<dbReference type="KEGG" id="ecr:ECIAI1_0282"/>
<dbReference type="HOGENOM" id="CLU_030231_0_0_6"/>
<dbReference type="UniPathway" id="UPA00098">
    <property type="reaction ID" value="UER00360"/>
</dbReference>
<dbReference type="GO" id="GO:0005737">
    <property type="term" value="C:cytoplasm"/>
    <property type="evidence" value="ECO:0007669"/>
    <property type="project" value="UniProtKB-SubCell"/>
</dbReference>
<dbReference type="GO" id="GO:0004350">
    <property type="term" value="F:glutamate-5-semialdehyde dehydrogenase activity"/>
    <property type="evidence" value="ECO:0007669"/>
    <property type="project" value="UniProtKB-UniRule"/>
</dbReference>
<dbReference type="GO" id="GO:0050661">
    <property type="term" value="F:NADP binding"/>
    <property type="evidence" value="ECO:0007669"/>
    <property type="project" value="InterPro"/>
</dbReference>
<dbReference type="GO" id="GO:0055129">
    <property type="term" value="P:L-proline biosynthetic process"/>
    <property type="evidence" value="ECO:0007669"/>
    <property type="project" value="UniProtKB-UniRule"/>
</dbReference>
<dbReference type="CDD" id="cd07079">
    <property type="entry name" value="ALDH_F18-19_ProA-GPR"/>
    <property type="match status" value="1"/>
</dbReference>
<dbReference type="FunFam" id="3.40.309.10:FF:000006">
    <property type="entry name" value="Gamma-glutamyl phosphate reductase"/>
    <property type="match status" value="1"/>
</dbReference>
<dbReference type="Gene3D" id="3.40.605.10">
    <property type="entry name" value="Aldehyde Dehydrogenase, Chain A, domain 1"/>
    <property type="match status" value="1"/>
</dbReference>
<dbReference type="Gene3D" id="3.40.309.10">
    <property type="entry name" value="Aldehyde Dehydrogenase, Chain A, domain 2"/>
    <property type="match status" value="1"/>
</dbReference>
<dbReference type="HAMAP" id="MF_00412">
    <property type="entry name" value="ProA"/>
    <property type="match status" value="1"/>
</dbReference>
<dbReference type="InterPro" id="IPR016161">
    <property type="entry name" value="Ald_DH/histidinol_DH"/>
</dbReference>
<dbReference type="InterPro" id="IPR016163">
    <property type="entry name" value="Ald_DH_C"/>
</dbReference>
<dbReference type="InterPro" id="IPR016162">
    <property type="entry name" value="Ald_DH_N"/>
</dbReference>
<dbReference type="InterPro" id="IPR015590">
    <property type="entry name" value="Aldehyde_DH_dom"/>
</dbReference>
<dbReference type="InterPro" id="IPR020593">
    <property type="entry name" value="G-glutamylP_reductase_CS"/>
</dbReference>
<dbReference type="InterPro" id="IPR012134">
    <property type="entry name" value="Glu-5-SA_DH"/>
</dbReference>
<dbReference type="InterPro" id="IPR000965">
    <property type="entry name" value="GPR_dom"/>
</dbReference>
<dbReference type="NCBIfam" id="NF001221">
    <property type="entry name" value="PRK00197.1"/>
    <property type="match status" value="1"/>
</dbReference>
<dbReference type="NCBIfam" id="TIGR00407">
    <property type="entry name" value="proA"/>
    <property type="match status" value="1"/>
</dbReference>
<dbReference type="PANTHER" id="PTHR11063:SF8">
    <property type="entry name" value="DELTA-1-PYRROLINE-5-CARBOXYLATE SYNTHASE"/>
    <property type="match status" value="1"/>
</dbReference>
<dbReference type="PANTHER" id="PTHR11063">
    <property type="entry name" value="GLUTAMATE SEMIALDEHYDE DEHYDROGENASE"/>
    <property type="match status" value="1"/>
</dbReference>
<dbReference type="Pfam" id="PF00171">
    <property type="entry name" value="Aldedh"/>
    <property type="match status" value="1"/>
</dbReference>
<dbReference type="PIRSF" id="PIRSF000151">
    <property type="entry name" value="GPR"/>
    <property type="match status" value="1"/>
</dbReference>
<dbReference type="SUPFAM" id="SSF53720">
    <property type="entry name" value="ALDH-like"/>
    <property type="match status" value="1"/>
</dbReference>
<dbReference type="PROSITE" id="PS01223">
    <property type="entry name" value="PROA"/>
    <property type="match status" value="1"/>
</dbReference>
<evidence type="ECO:0000255" key="1">
    <source>
        <dbReference type="HAMAP-Rule" id="MF_00412"/>
    </source>
</evidence>
<gene>
    <name evidence="1" type="primary">proA</name>
    <name type="ordered locus">ECIAI1_0282</name>
</gene>
<organism>
    <name type="scientific">Escherichia coli O8 (strain IAI1)</name>
    <dbReference type="NCBI Taxonomy" id="585034"/>
    <lineage>
        <taxon>Bacteria</taxon>
        <taxon>Pseudomonadati</taxon>
        <taxon>Pseudomonadota</taxon>
        <taxon>Gammaproteobacteria</taxon>
        <taxon>Enterobacterales</taxon>
        <taxon>Enterobacteriaceae</taxon>
        <taxon>Escherichia</taxon>
    </lineage>
</organism>
<keyword id="KW-0028">Amino-acid biosynthesis</keyword>
<keyword id="KW-0963">Cytoplasm</keyword>
<keyword id="KW-0521">NADP</keyword>
<keyword id="KW-0560">Oxidoreductase</keyword>
<keyword id="KW-0641">Proline biosynthesis</keyword>
<accession>B7M272</accession>
<sequence length="417" mass="44630">MLEQMGIAAKQASYKLAQLSSREKNRVLEKIADELEAQSEIILNANAQDVADARANGLGEAMLDRLALTPARLKGIADDVRQVCNLADPVGQVIDGSVLDSGLRLERRRVPLGVIGVIYEARPNVTVDVASLCLKTGNAVILRGGKETCRTNAATVAVIQDALKSCGLPAGAVQAIDNPDRALVSEMLRMDKYIDMLIPRGGAGLHKLCREQSTIPVITGGIGVCHIYVDESVEIAEALKVIVNAKTQRPSTCNTVETLLVNKNIADSFLPALSKQMAESGVTLHADAAALAQLQAGPAKVVAVKAEEYDDEFLSLDLNVKIVSDLDDAIAHIREHGTQHSDAILTRDMRNAQRFVNEVDSSAVYVNASTRFTDGGQFGLGAEVAVSTQKLHARGPMGLEALTTYKWIGIGDYTIRA</sequence>
<feature type="chain" id="PRO_1000193611" description="Gamma-glutamyl phosphate reductase">
    <location>
        <begin position="1"/>
        <end position="417"/>
    </location>
</feature>
<proteinExistence type="inferred from homology"/>
<reference key="1">
    <citation type="journal article" date="2009" name="PLoS Genet.">
        <title>Organised genome dynamics in the Escherichia coli species results in highly diverse adaptive paths.</title>
        <authorList>
            <person name="Touchon M."/>
            <person name="Hoede C."/>
            <person name="Tenaillon O."/>
            <person name="Barbe V."/>
            <person name="Baeriswyl S."/>
            <person name="Bidet P."/>
            <person name="Bingen E."/>
            <person name="Bonacorsi S."/>
            <person name="Bouchier C."/>
            <person name="Bouvet O."/>
            <person name="Calteau A."/>
            <person name="Chiapello H."/>
            <person name="Clermont O."/>
            <person name="Cruveiller S."/>
            <person name="Danchin A."/>
            <person name="Diard M."/>
            <person name="Dossat C."/>
            <person name="Karoui M.E."/>
            <person name="Frapy E."/>
            <person name="Garry L."/>
            <person name="Ghigo J.M."/>
            <person name="Gilles A.M."/>
            <person name="Johnson J."/>
            <person name="Le Bouguenec C."/>
            <person name="Lescat M."/>
            <person name="Mangenot S."/>
            <person name="Martinez-Jehanne V."/>
            <person name="Matic I."/>
            <person name="Nassif X."/>
            <person name="Oztas S."/>
            <person name="Petit M.A."/>
            <person name="Pichon C."/>
            <person name="Rouy Z."/>
            <person name="Ruf C.S."/>
            <person name="Schneider D."/>
            <person name="Tourret J."/>
            <person name="Vacherie B."/>
            <person name="Vallenet D."/>
            <person name="Medigue C."/>
            <person name="Rocha E.P.C."/>
            <person name="Denamur E."/>
        </authorList>
    </citation>
    <scope>NUCLEOTIDE SEQUENCE [LARGE SCALE GENOMIC DNA]</scope>
    <source>
        <strain>IAI1</strain>
    </source>
</reference>